<gene>
    <name evidence="1" type="primary">aroA</name>
    <name type="synonym">aroE</name>
    <name type="ordered locus">lin2037</name>
</gene>
<dbReference type="EC" id="2.5.1.19" evidence="1"/>
<dbReference type="EMBL" id="AL596170">
    <property type="protein sequence ID" value="CAC97267.1"/>
    <property type="molecule type" value="Genomic_DNA"/>
</dbReference>
<dbReference type="PIR" id="AC1687">
    <property type="entry name" value="AC1687"/>
</dbReference>
<dbReference type="RefSeq" id="WP_010991719.1">
    <property type="nucleotide sequence ID" value="NC_003212.1"/>
</dbReference>
<dbReference type="SMR" id="Q92A85"/>
<dbReference type="STRING" id="272626.gene:17566395"/>
<dbReference type="KEGG" id="lin:aroE"/>
<dbReference type="eggNOG" id="COG0128">
    <property type="taxonomic scope" value="Bacteria"/>
</dbReference>
<dbReference type="HOGENOM" id="CLU_024321_0_1_9"/>
<dbReference type="OrthoDB" id="9809920at2"/>
<dbReference type="UniPathway" id="UPA00053">
    <property type="reaction ID" value="UER00089"/>
</dbReference>
<dbReference type="Proteomes" id="UP000002513">
    <property type="component" value="Chromosome"/>
</dbReference>
<dbReference type="GO" id="GO:0005737">
    <property type="term" value="C:cytoplasm"/>
    <property type="evidence" value="ECO:0007669"/>
    <property type="project" value="UniProtKB-SubCell"/>
</dbReference>
<dbReference type="GO" id="GO:0003866">
    <property type="term" value="F:3-phosphoshikimate 1-carboxyvinyltransferase activity"/>
    <property type="evidence" value="ECO:0007669"/>
    <property type="project" value="UniProtKB-UniRule"/>
</dbReference>
<dbReference type="GO" id="GO:0008652">
    <property type="term" value="P:amino acid biosynthetic process"/>
    <property type="evidence" value="ECO:0007669"/>
    <property type="project" value="UniProtKB-KW"/>
</dbReference>
<dbReference type="GO" id="GO:0009073">
    <property type="term" value="P:aromatic amino acid family biosynthetic process"/>
    <property type="evidence" value="ECO:0007669"/>
    <property type="project" value="UniProtKB-KW"/>
</dbReference>
<dbReference type="GO" id="GO:0009423">
    <property type="term" value="P:chorismate biosynthetic process"/>
    <property type="evidence" value="ECO:0007669"/>
    <property type="project" value="UniProtKB-UniRule"/>
</dbReference>
<dbReference type="CDD" id="cd01556">
    <property type="entry name" value="EPSP_synthase"/>
    <property type="match status" value="1"/>
</dbReference>
<dbReference type="FunFam" id="3.65.10.10:FF:000005">
    <property type="entry name" value="3-phosphoshikimate 1-carboxyvinyltransferase"/>
    <property type="match status" value="1"/>
</dbReference>
<dbReference type="FunFam" id="3.65.10.10:FF:000006">
    <property type="entry name" value="3-phosphoshikimate 1-carboxyvinyltransferase"/>
    <property type="match status" value="1"/>
</dbReference>
<dbReference type="Gene3D" id="3.65.10.10">
    <property type="entry name" value="Enolpyruvate transferase domain"/>
    <property type="match status" value="2"/>
</dbReference>
<dbReference type="HAMAP" id="MF_00210">
    <property type="entry name" value="EPSP_synth"/>
    <property type="match status" value="1"/>
</dbReference>
<dbReference type="InterPro" id="IPR001986">
    <property type="entry name" value="Enolpyruvate_Tfrase_dom"/>
</dbReference>
<dbReference type="InterPro" id="IPR036968">
    <property type="entry name" value="Enolpyruvate_Tfrase_sf"/>
</dbReference>
<dbReference type="InterPro" id="IPR006264">
    <property type="entry name" value="EPSP_synthase"/>
</dbReference>
<dbReference type="InterPro" id="IPR023193">
    <property type="entry name" value="EPSP_synthase_CS"/>
</dbReference>
<dbReference type="InterPro" id="IPR013792">
    <property type="entry name" value="RNA3'P_cycl/enolpyr_Trfase_a/b"/>
</dbReference>
<dbReference type="NCBIfam" id="TIGR01356">
    <property type="entry name" value="aroA"/>
    <property type="match status" value="1"/>
</dbReference>
<dbReference type="PANTHER" id="PTHR21090">
    <property type="entry name" value="AROM/DEHYDROQUINATE SYNTHASE"/>
    <property type="match status" value="1"/>
</dbReference>
<dbReference type="PANTHER" id="PTHR21090:SF5">
    <property type="entry name" value="PENTAFUNCTIONAL AROM POLYPEPTIDE"/>
    <property type="match status" value="1"/>
</dbReference>
<dbReference type="Pfam" id="PF00275">
    <property type="entry name" value="EPSP_synthase"/>
    <property type="match status" value="1"/>
</dbReference>
<dbReference type="PIRSF" id="PIRSF000505">
    <property type="entry name" value="EPSPS"/>
    <property type="match status" value="1"/>
</dbReference>
<dbReference type="SUPFAM" id="SSF55205">
    <property type="entry name" value="EPT/RTPC-like"/>
    <property type="match status" value="1"/>
</dbReference>
<dbReference type="PROSITE" id="PS00104">
    <property type="entry name" value="EPSP_SYNTHASE_1"/>
    <property type="match status" value="1"/>
</dbReference>
<dbReference type="PROSITE" id="PS00885">
    <property type="entry name" value="EPSP_SYNTHASE_2"/>
    <property type="match status" value="1"/>
</dbReference>
<keyword id="KW-0028">Amino-acid biosynthesis</keyword>
<keyword id="KW-0057">Aromatic amino acid biosynthesis</keyword>
<keyword id="KW-0963">Cytoplasm</keyword>
<keyword id="KW-0808">Transferase</keyword>
<protein>
    <recommendedName>
        <fullName evidence="1">3-phosphoshikimate 1-carboxyvinyltransferase</fullName>
        <ecNumber evidence="1">2.5.1.19</ecNumber>
    </recommendedName>
    <alternativeName>
        <fullName evidence="1">5-enolpyruvylshikimate-3-phosphate synthase</fullName>
        <shortName evidence="1">EPSP synthase</shortName>
        <shortName evidence="1">EPSPS</shortName>
    </alternativeName>
</protein>
<reference key="1">
    <citation type="journal article" date="2001" name="Science">
        <title>Comparative genomics of Listeria species.</title>
        <authorList>
            <person name="Glaser P."/>
            <person name="Frangeul L."/>
            <person name="Buchrieser C."/>
            <person name="Rusniok C."/>
            <person name="Amend A."/>
            <person name="Baquero F."/>
            <person name="Berche P."/>
            <person name="Bloecker H."/>
            <person name="Brandt P."/>
            <person name="Chakraborty T."/>
            <person name="Charbit A."/>
            <person name="Chetouani F."/>
            <person name="Couve E."/>
            <person name="de Daruvar A."/>
            <person name="Dehoux P."/>
            <person name="Domann E."/>
            <person name="Dominguez-Bernal G."/>
            <person name="Duchaud E."/>
            <person name="Durant L."/>
            <person name="Dussurget O."/>
            <person name="Entian K.-D."/>
            <person name="Fsihi H."/>
            <person name="Garcia-del Portillo F."/>
            <person name="Garrido P."/>
            <person name="Gautier L."/>
            <person name="Goebel W."/>
            <person name="Gomez-Lopez N."/>
            <person name="Hain T."/>
            <person name="Hauf J."/>
            <person name="Jackson D."/>
            <person name="Jones L.-M."/>
            <person name="Kaerst U."/>
            <person name="Kreft J."/>
            <person name="Kuhn M."/>
            <person name="Kunst F."/>
            <person name="Kurapkat G."/>
            <person name="Madueno E."/>
            <person name="Maitournam A."/>
            <person name="Mata Vicente J."/>
            <person name="Ng E."/>
            <person name="Nedjari H."/>
            <person name="Nordsiek G."/>
            <person name="Novella S."/>
            <person name="de Pablos B."/>
            <person name="Perez-Diaz J.-C."/>
            <person name="Purcell R."/>
            <person name="Remmel B."/>
            <person name="Rose M."/>
            <person name="Schlueter T."/>
            <person name="Simoes N."/>
            <person name="Tierrez A."/>
            <person name="Vazquez-Boland J.-A."/>
            <person name="Voss H."/>
            <person name="Wehland J."/>
            <person name="Cossart P."/>
        </authorList>
    </citation>
    <scope>NUCLEOTIDE SEQUENCE [LARGE SCALE GENOMIC DNA]</scope>
    <source>
        <strain>ATCC BAA-680 / CLIP 11262</strain>
    </source>
</reference>
<name>AROA_LISIN</name>
<organism>
    <name type="scientific">Listeria innocua serovar 6a (strain ATCC BAA-680 / CLIP 11262)</name>
    <dbReference type="NCBI Taxonomy" id="272626"/>
    <lineage>
        <taxon>Bacteria</taxon>
        <taxon>Bacillati</taxon>
        <taxon>Bacillota</taxon>
        <taxon>Bacilli</taxon>
        <taxon>Bacillales</taxon>
        <taxon>Listeriaceae</taxon>
        <taxon>Listeria</taxon>
    </lineage>
</organism>
<accession>Q92A85</accession>
<feature type="chain" id="PRO_0000088268" description="3-phosphoshikimate 1-carboxyvinyltransferase">
    <location>
        <begin position="1"/>
        <end position="428"/>
    </location>
</feature>
<feature type="active site" description="Proton acceptor" evidence="1">
    <location>
        <position position="314"/>
    </location>
</feature>
<feature type="binding site" evidence="1">
    <location>
        <position position="20"/>
    </location>
    <ligand>
        <name>3-phosphoshikimate</name>
        <dbReference type="ChEBI" id="CHEBI:145989"/>
    </ligand>
</feature>
<feature type="binding site" evidence="1">
    <location>
        <position position="20"/>
    </location>
    <ligand>
        <name>phosphoenolpyruvate</name>
        <dbReference type="ChEBI" id="CHEBI:58702"/>
    </ligand>
</feature>
<feature type="binding site" evidence="1">
    <location>
        <position position="21"/>
    </location>
    <ligand>
        <name>3-phosphoshikimate</name>
        <dbReference type="ChEBI" id="CHEBI:145989"/>
    </ligand>
</feature>
<feature type="binding site" evidence="1">
    <location>
        <position position="25"/>
    </location>
    <ligand>
        <name>3-phosphoshikimate</name>
        <dbReference type="ChEBI" id="CHEBI:145989"/>
    </ligand>
</feature>
<feature type="binding site" evidence="1">
    <location>
        <position position="92"/>
    </location>
    <ligand>
        <name>phosphoenolpyruvate</name>
        <dbReference type="ChEBI" id="CHEBI:58702"/>
    </ligand>
</feature>
<feature type="binding site" evidence="1">
    <location>
        <position position="120"/>
    </location>
    <ligand>
        <name>phosphoenolpyruvate</name>
        <dbReference type="ChEBI" id="CHEBI:58702"/>
    </ligand>
</feature>
<feature type="binding site" evidence="1">
    <location>
        <position position="166"/>
    </location>
    <ligand>
        <name>3-phosphoshikimate</name>
        <dbReference type="ChEBI" id="CHEBI:145989"/>
    </ligand>
</feature>
<feature type="binding site" evidence="1">
    <location>
        <position position="168"/>
    </location>
    <ligand>
        <name>3-phosphoshikimate</name>
        <dbReference type="ChEBI" id="CHEBI:145989"/>
    </ligand>
</feature>
<feature type="binding site" evidence="1">
    <location>
        <position position="168"/>
    </location>
    <ligand>
        <name>phosphoenolpyruvate</name>
        <dbReference type="ChEBI" id="CHEBI:58702"/>
    </ligand>
</feature>
<feature type="binding site" evidence="1">
    <location>
        <position position="314"/>
    </location>
    <ligand>
        <name>3-phosphoshikimate</name>
        <dbReference type="ChEBI" id="CHEBI:145989"/>
    </ligand>
</feature>
<feature type="binding site" evidence="1">
    <location>
        <position position="341"/>
    </location>
    <ligand>
        <name>3-phosphoshikimate</name>
        <dbReference type="ChEBI" id="CHEBI:145989"/>
    </ligand>
</feature>
<feature type="binding site" evidence="1">
    <location>
        <position position="345"/>
    </location>
    <ligand>
        <name>phosphoenolpyruvate</name>
        <dbReference type="ChEBI" id="CHEBI:58702"/>
    </ligand>
</feature>
<feature type="binding site" evidence="1">
    <location>
        <position position="387"/>
    </location>
    <ligand>
        <name>phosphoenolpyruvate</name>
        <dbReference type="ChEBI" id="CHEBI:58702"/>
    </ligand>
</feature>
<sequence length="428" mass="45994">MKLITNKQGLVGEITVPGDKSMSHRSIMFGAIAEGKTVIRHFLRADDCLGTIKAFKALGVKIEETDEEIIVHGTGSDGLKQAEGPLDIGNSGTTIRLMMGILAGRDFDTVILGDESIAKRPMNRVMLPLQEMGAKMHGKDGSEFAPISIIGNQSLKRMEYHMPVASAQVKSAIIFAALQAEGETIIHEKEKTRDHTEHMIRQFGGEIEMDGLTIRVKGGQKFIGQEMTVPGDVSSAAFFIVAGLITPGSEIELTHVGLNPTRTGIFDVVEQMGGSLVVKDSSRSTGKLAGTVVVKSSELKGTEIGGDIIPRLIDEIPVIALLATQAEGTTIIKDAAELKVKETNRIDAVANELNKMGADITPTEDGLIIRGKTPLHAANVTSYGDHRIGMMLQIAALLVEDGDVELDRAEAVSVSYPTFFEDIRSLLK</sequence>
<comment type="function">
    <text evidence="1">Catalyzes the transfer of the enolpyruvyl moiety of phosphoenolpyruvate (PEP) to the 5-hydroxyl of shikimate-3-phosphate (S3P) to produce enolpyruvyl shikimate-3-phosphate and inorganic phosphate.</text>
</comment>
<comment type="catalytic activity">
    <reaction evidence="1">
        <text>3-phosphoshikimate + phosphoenolpyruvate = 5-O-(1-carboxyvinyl)-3-phosphoshikimate + phosphate</text>
        <dbReference type="Rhea" id="RHEA:21256"/>
        <dbReference type="ChEBI" id="CHEBI:43474"/>
        <dbReference type="ChEBI" id="CHEBI:57701"/>
        <dbReference type="ChEBI" id="CHEBI:58702"/>
        <dbReference type="ChEBI" id="CHEBI:145989"/>
        <dbReference type="EC" id="2.5.1.19"/>
    </reaction>
    <physiologicalReaction direction="left-to-right" evidence="1">
        <dbReference type="Rhea" id="RHEA:21257"/>
    </physiologicalReaction>
</comment>
<comment type="pathway">
    <text evidence="1">Metabolic intermediate biosynthesis; chorismate biosynthesis; chorismate from D-erythrose 4-phosphate and phosphoenolpyruvate: step 6/7.</text>
</comment>
<comment type="subunit">
    <text evidence="1">Monomer.</text>
</comment>
<comment type="subcellular location">
    <subcellularLocation>
        <location evidence="1">Cytoplasm</location>
    </subcellularLocation>
</comment>
<comment type="similarity">
    <text evidence="1">Belongs to the EPSP synthase family.</text>
</comment>
<evidence type="ECO:0000255" key="1">
    <source>
        <dbReference type="HAMAP-Rule" id="MF_00210"/>
    </source>
</evidence>
<proteinExistence type="inferred from homology"/>